<evidence type="ECO:0000250" key="1">
    <source>
        <dbReference type="UniProtKB" id="P28881"/>
    </source>
</evidence>
<evidence type="ECO:0000255" key="2"/>
<evidence type="ECO:0000256" key="3">
    <source>
        <dbReference type="SAM" id="MobiDB-lite"/>
    </source>
</evidence>
<evidence type="ECO:0000269" key="4">
    <source>
    </source>
</evidence>
<evidence type="ECO:0000269" key="5">
    <source>
    </source>
</evidence>
<evidence type="ECO:0000303" key="6">
    <source>
    </source>
</evidence>
<evidence type="ECO:0000305" key="7"/>
<evidence type="ECO:0000305" key="8">
    <source>
    </source>
</evidence>
<reference key="1">
    <citation type="journal article" date="1999" name="Peptides">
        <title>Conopeptides from Conus striatus and Conus textile by cDNA cloning.</title>
        <authorList>
            <person name="Lu B.-S."/>
            <person name="Yu F."/>
            <person name="Zhao D."/>
            <person name="Huang P.-T."/>
            <person name="Huang C.-F."/>
        </authorList>
    </citation>
    <scope>NUCLEOTIDE SEQUENCE [MRNA]</scope>
    <source>
        <tissue>Venom duct</tissue>
    </source>
</reference>
<reference key="2">
    <citation type="journal article" date="1992" name="Biochemistry">
        <title>Novel alpha- and omega-conotoxins from Conus striatus venom.</title>
        <authorList>
            <person name="Ramilo C."/>
            <person name="Zafaralla G.C."/>
            <person name="Nadasdi L."/>
            <person name="Hammerland L.G."/>
            <person name="Yoshikami D."/>
            <person name="Gray W.R."/>
            <person name="Kristipati R."/>
            <person name="Ramachandran J."/>
            <person name="Miljanich G.P."/>
            <person name="Olivera B.M."/>
            <person name="Cruz L.J."/>
        </authorList>
    </citation>
    <scope>PROTEIN SEQUENCE OF 49-72</scope>
    <scope>FUNCTION</scope>
    <scope>SYNTHESIS OF 49-72</scope>
    <scope>HYDROXYLATION AT PRO-55</scope>
    <scope>AMIDATION AT THR-72</scope>
    <scope>SUBCELLULAR LOCATION</scope>
    <scope>TOXIC DOSE</scope>
    <source>
        <tissue>Venom</tissue>
    </source>
</reference>
<reference key="3">
    <citation type="journal article" date="2006" name="Biochimie">
        <title>Analysis of expressed sequence tags from the venom ducts of Conus striatus: focusing on the expression profile of conotoxins.</title>
        <authorList>
            <person name="Pi C."/>
            <person name="Liu Y."/>
            <person name="Peng C."/>
            <person name="Jiang X."/>
            <person name="Liu J."/>
            <person name="Xu B."/>
            <person name="Yu X."/>
            <person name="Yu Y."/>
            <person name="Jiang X."/>
            <person name="Wang L."/>
            <person name="Dong M."/>
            <person name="Chen S."/>
            <person name="Xu A.-L."/>
        </authorList>
    </citation>
    <scope>NUCLEOTIDE SEQUENCE [MRNA] OF 49-72</scope>
    <scope>VARIANTS PRO-51; PRO-54; SER-55; ALA-59 AND SER-67</scope>
    <source>
        <tissue>Venom duct</tissue>
    </source>
</reference>
<dbReference type="EMBL" id="AF146347">
    <property type="protein sequence ID" value="AAD31907.1"/>
    <property type="molecule type" value="mRNA"/>
</dbReference>
<dbReference type="PIR" id="B44379">
    <property type="entry name" value="B44379"/>
</dbReference>
<dbReference type="SMR" id="P28880"/>
<dbReference type="ConoServer" id="863">
    <property type="toxin name" value="SVIA precursor"/>
</dbReference>
<dbReference type="GO" id="GO:0005576">
    <property type="term" value="C:extracellular region"/>
    <property type="evidence" value="ECO:0007669"/>
    <property type="project" value="UniProtKB-SubCell"/>
</dbReference>
<dbReference type="GO" id="GO:0044231">
    <property type="term" value="C:host cell presynaptic membrane"/>
    <property type="evidence" value="ECO:0007669"/>
    <property type="project" value="UniProtKB-KW"/>
</dbReference>
<dbReference type="GO" id="GO:0005246">
    <property type="term" value="F:calcium channel regulator activity"/>
    <property type="evidence" value="ECO:0007669"/>
    <property type="project" value="UniProtKB-KW"/>
</dbReference>
<dbReference type="GO" id="GO:0008200">
    <property type="term" value="F:ion channel inhibitor activity"/>
    <property type="evidence" value="ECO:0007669"/>
    <property type="project" value="InterPro"/>
</dbReference>
<dbReference type="GO" id="GO:0090729">
    <property type="term" value="F:toxin activity"/>
    <property type="evidence" value="ECO:0007669"/>
    <property type="project" value="UniProtKB-KW"/>
</dbReference>
<dbReference type="InterPro" id="IPR004214">
    <property type="entry name" value="Conotoxin"/>
</dbReference>
<dbReference type="InterPro" id="IPR012321">
    <property type="entry name" value="Conotoxin_omega-typ_CS"/>
</dbReference>
<dbReference type="Pfam" id="PF02950">
    <property type="entry name" value="Conotoxin"/>
    <property type="match status" value="1"/>
</dbReference>
<dbReference type="PROSITE" id="PS60004">
    <property type="entry name" value="OMEGA_CONOTOXIN"/>
    <property type="match status" value="1"/>
</dbReference>
<name>O16A_CONST</name>
<protein>
    <recommendedName>
        <fullName evidence="6">Omega-conotoxin SVIA</fullName>
    </recommendedName>
    <alternativeName>
        <fullName evidence="6">SNX-157</fullName>
    </alternativeName>
</protein>
<organism>
    <name type="scientific">Conus striatus</name>
    <name type="common">Striated cone</name>
    <dbReference type="NCBI Taxonomy" id="6493"/>
    <lineage>
        <taxon>Eukaryota</taxon>
        <taxon>Metazoa</taxon>
        <taxon>Spiralia</taxon>
        <taxon>Lophotrochozoa</taxon>
        <taxon>Mollusca</taxon>
        <taxon>Gastropoda</taxon>
        <taxon>Caenogastropoda</taxon>
        <taxon>Neogastropoda</taxon>
        <taxon>Conoidea</taxon>
        <taxon>Conidae</taxon>
        <taxon>Conus</taxon>
        <taxon>Pionoconus</taxon>
    </lineage>
</organism>
<comment type="function">
    <text evidence="4">Omega-conotoxins act at presynaptic membranes, they bind and block voltage-gated calcium channels (Cav). In vivo, this toxin is a potent paralytic toxic in lower vertebrate species, but it is much less effective in mammals.</text>
</comment>
<comment type="subcellular location">
    <subcellularLocation>
        <location evidence="4">Secreted</location>
    </subcellularLocation>
</comment>
<comment type="tissue specificity">
    <text evidence="8">Expressed by the venom duct.</text>
</comment>
<comment type="domain">
    <text evidence="1">The presence of a 'disulfide through disulfide knot' structurally defines this protein as a knottin.</text>
</comment>
<comment type="domain">
    <text evidence="7">The cysteine framework is VI/VII (C-C-CC-C-C).</text>
</comment>
<comment type="toxic dose">
    <text evidence="4">On fish, this toxin causes paralysis and death on intramuscular injection at doses of approximately 20 pmol/g. It does not kill mice even at extremely high doses.</text>
</comment>
<comment type="similarity">
    <text evidence="7">Belongs to the conotoxin O1 superfamily.</text>
</comment>
<comment type="caution">
    <text evidence="7">Thr-72 is not followed in the nucleotide sequence by the expected Gly residue required to produce amidation.</text>
</comment>
<sequence>MKLTCVMIVAVLLLTACQLITAEDSRGTQKHRTLRSTARRSKSESTTRCRSSGSPCGVTSICCGRCYRGKCT</sequence>
<accession>P28880</accession>
<accession>Q9UB26</accession>
<proteinExistence type="evidence at protein level"/>
<feature type="signal peptide" evidence="2">
    <location>
        <begin position="1"/>
        <end position="22"/>
    </location>
</feature>
<feature type="propeptide" id="PRO_0000034924" evidence="7">
    <location>
        <begin position="23"/>
        <end position="48"/>
    </location>
</feature>
<feature type="peptide" id="PRO_0000034925" description="Omega-conotoxin SVIA" evidence="4">
    <location>
        <begin position="49"/>
        <end position="72"/>
    </location>
</feature>
<feature type="region of interest" description="Disordered" evidence="3">
    <location>
        <begin position="25"/>
        <end position="56"/>
    </location>
</feature>
<feature type="compositionally biased region" description="Basic residues" evidence="3">
    <location>
        <begin position="28"/>
        <end position="40"/>
    </location>
</feature>
<feature type="modified residue" description="4-hydroxyproline" evidence="4">
    <location>
        <position position="55"/>
    </location>
</feature>
<feature type="modified residue" description="Threonine amide" evidence="4">
    <location>
        <position position="72"/>
    </location>
</feature>
<feature type="disulfide bond" evidence="1">
    <location>
        <begin position="49"/>
        <end position="63"/>
    </location>
</feature>
<feature type="disulfide bond" evidence="1">
    <location>
        <begin position="56"/>
        <end position="66"/>
    </location>
</feature>
<feature type="disulfide bond" evidence="1">
    <location>
        <begin position="62"/>
        <end position="71"/>
    </location>
</feature>
<feature type="sequence variant" description="In SVIA-1, SVIA-2 and SVIA-5." evidence="5">
    <original>S</original>
    <variation>P</variation>
    <location>
        <position position="51"/>
    </location>
</feature>
<feature type="sequence variant" description="In SVIA-4." evidence="5">
    <original>S</original>
    <variation>P</variation>
    <location>
        <position position="54"/>
    </location>
</feature>
<feature type="sequence variant" description="In SVIA-3." evidence="5">
    <original>P</original>
    <variation>S</variation>
    <location>
        <position position="55"/>
    </location>
</feature>
<feature type="sequence variant" description="In SVIA-5." evidence="5">
    <original>T</original>
    <variation>A</variation>
    <location>
        <position position="59"/>
    </location>
</feature>
<feature type="sequence variant" description="In SVIA-2 and SVIA-5." evidence="5">
    <original>Y</original>
    <variation>S</variation>
    <location>
        <position position="67"/>
    </location>
</feature>
<keyword id="KW-0027">Amidation</keyword>
<keyword id="KW-0108">Calcium channel impairing toxin</keyword>
<keyword id="KW-0903">Direct protein sequencing</keyword>
<keyword id="KW-1015">Disulfide bond</keyword>
<keyword id="KW-0379">Hydroxylation</keyword>
<keyword id="KW-0872">Ion channel impairing toxin</keyword>
<keyword id="KW-0960">Knottin</keyword>
<keyword id="KW-0528">Neurotoxin</keyword>
<keyword id="KW-0638">Presynaptic neurotoxin</keyword>
<keyword id="KW-0964">Secreted</keyword>
<keyword id="KW-0732">Signal</keyword>
<keyword id="KW-0800">Toxin</keyword>
<keyword id="KW-1218">Voltage-gated calcium channel impairing toxin</keyword>